<sequence>MSKTLYQKIYDSHIVYEDKNSEAILYIDLHLLHEVTSPQAFNALRNKKRKVRQSKKTFATMDHNVSTKIRSIHASGSMAQKQMEQLINNCTEFNIPLYDINNPNQGIVHVIAPEKGMTLPGMTIVCGDSHTSTHGAFGTLAFGIGTSEVEHVLATQTLKQKRFKNMKVEIIGEMPKFVTAKDIILFIIGKLGSSSGAGHVIEFCGNVIKNMSMEERMTICNMAVEMGAKSGLIAPDEITYKYLKDKIYSPFGIFWEKSLDYWKFLKSDKNAYFDKCVTVDISNLAPQITWGTNPDQVISIDEKIPDYNNINSIVKRKSAKSACEYMGLQSNTYLTNISIDKVFIGSCTNARIEDLRSASKILKNKKVAKHVTAIVVPGSGLVKNQAEEEGLDKIFIDAGFEWRLPGCSMCLGMNKDRLNFGERCASHSNRNFEGRQGRGGRTH</sequence>
<proteinExistence type="inferred from homology"/>
<evidence type="ECO:0000255" key="1">
    <source>
        <dbReference type="HAMAP-Rule" id="MF_01026"/>
    </source>
</evidence>
<reference key="1">
    <citation type="journal article" date="2001" name="J. Bacteriol.">
        <title>Vertical transmission of biosynthetic plasmids in aphid endosymbionts (Buchnera).</title>
        <authorList>
            <person name="Wernegreen J.J."/>
            <person name="Moran N.A."/>
        </authorList>
    </citation>
    <scope>NUCLEOTIDE SEQUENCE [GENOMIC DNA]</scope>
</reference>
<keyword id="KW-0004">4Fe-4S</keyword>
<keyword id="KW-0028">Amino-acid biosynthesis</keyword>
<keyword id="KW-0100">Branched-chain amino acid biosynthesis</keyword>
<keyword id="KW-0408">Iron</keyword>
<keyword id="KW-0411">Iron-sulfur</keyword>
<keyword id="KW-0432">Leucine biosynthesis</keyword>
<keyword id="KW-0456">Lyase</keyword>
<keyword id="KW-0479">Metal-binding</keyword>
<keyword id="KW-0614">Plasmid</keyword>
<geneLocation type="plasmid">
    <name>pLeu</name>
    <name>pBAp1</name>
</geneLocation>
<organism>
    <name type="scientific">Buchnera aphidicola subsp. Uroleucon aeneum</name>
    <dbReference type="NCBI Taxonomy" id="118112"/>
    <lineage>
        <taxon>Bacteria</taxon>
        <taxon>Pseudomonadati</taxon>
        <taxon>Pseudomonadota</taxon>
        <taxon>Gammaproteobacteria</taxon>
        <taxon>Enterobacterales</taxon>
        <taxon>Erwiniaceae</taxon>
        <taxon>Buchnera</taxon>
    </lineage>
</organism>
<accession>Q9EVG5</accession>
<dbReference type="EC" id="4.2.1.33" evidence="1"/>
<dbReference type="EMBL" id="AF197455">
    <property type="protein sequence ID" value="AAG31400.1"/>
    <property type="molecule type" value="Genomic_DNA"/>
</dbReference>
<dbReference type="SMR" id="Q9EVG5"/>
<dbReference type="UniPathway" id="UPA00048">
    <property type="reaction ID" value="UER00071"/>
</dbReference>
<dbReference type="GO" id="GO:0003861">
    <property type="term" value="F:3-isopropylmalate dehydratase activity"/>
    <property type="evidence" value="ECO:0007669"/>
    <property type="project" value="UniProtKB-EC"/>
</dbReference>
<dbReference type="GO" id="GO:0051539">
    <property type="term" value="F:4 iron, 4 sulfur cluster binding"/>
    <property type="evidence" value="ECO:0007669"/>
    <property type="project" value="UniProtKB-KW"/>
</dbReference>
<dbReference type="GO" id="GO:0046872">
    <property type="term" value="F:metal ion binding"/>
    <property type="evidence" value="ECO:0007669"/>
    <property type="project" value="UniProtKB-KW"/>
</dbReference>
<dbReference type="GO" id="GO:0009098">
    <property type="term" value="P:L-leucine biosynthetic process"/>
    <property type="evidence" value="ECO:0007669"/>
    <property type="project" value="UniProtKB-UniPathway"/>
</dbReference>
<dbReference type="CDD" id="cd01583">
    <property type="entry name" value="IPMI"/>
    <property type="match status" value="1"/>
</dbReference>
<dbReference type="Gene3D" id="3.30.499.10">
    <property type="entry name" value="Aconitase, domain 3"/>
    <property type="match status" value="2"/>
</dbReference>
<dbReference type="HAMAP" id="MF_01026">
    <property type="entry name" value="LeuC_type1"/>
    <property type="match status" value="1"/>
</dbReference>
<dbReference type="InterPro" id="IPR004430">
    <property type="entry name" value="3-IsopropMal_deHydase_lsu"/>
</dbReference>
<dbReference type="InterPro" id="IPR015931">
    <property type="entry name" value="Acnase/IPM_dHydase_lsu_aba_1/3"/>
</dbReference>
<dbReference type="InterPro" id="IPR001030">
    <property type="entry name" value="Acoase/IPM_deHydtase_lsu_aba"/>
</dbReference>
<dbReference type="InterPro" id="IPR018136">
    <property type="entry name" value="Aconitase_4Fe-4S_BS"/>
</dbReference>
<dbReference type="InterPro" id="IPR036008">
    <property type="entry name" value="Aconitase_4Fe-4S_dom"/>
</dbReference>
<dbReference type="InterPro" id="IPR050067">
    <property type="entry name" value="IPM_dehydratase_rel_enz"/>
</dbReference>
<dbReference type="InterPro" id="IPR033941">
    <property type="entry name" value="IPMI_cat"/>
</dbReference>
<dbReference type="NCBIfam" id="TIGR00170">
    <property type="entry name" value="leuC"/>
    <property type="match status" value="1"/>
</dbReference>
<dbReference type="NCBIfam" id="NF004016">
    <property type="entry name" value="PRK05478.1"/>
    <property type="match status" value="1"/>
</dbReference>
<dbReference type="NCBIfam" id="NF009116">
    <property type="entry name" value="PRK12466.1"/>
    <property type="match status" value="1"/>
</dbReference>
<dbReference type="PANTHER" id="PTHR43822:SF9">
    <property type="entry name" value="3-ISOPROPYLMALATE DEHYDRATASE"/>
    <property type="match status" value="1"/>
</dbReference>
<dbReference type="PANTHER" id="PTHR43822">
    <property type="entry name" value="HOMOACONITASE, MITOCHONDRIAL-RELATED"/>
    <property type="match status" value="1"/>
</dbReference>
<dbReference type="Pfam" id="PF00330">
    <property type="entry name" value="Aconitase"/>
    <property type="match status" value="1"/>
</dbReference>
<dbReference type="PRINTS" id="PR00415">
    <property type="entry name" value="ACONITASE"/>
</dbReference>
<dbReference type="SUPFAM" id="SSF53732">
    <property type="entry name" value="Aconitase iron-sulfur domain"/>
    <property type="match status" value="1"/>
</dbReference>
<dbReference type="PROSITE" id="PS00450">
    <property type="entry name" value="ACONITASE_1"/>
    <property type="match status" value="1"/>
</dbReference>
<dbReference type="PROSITE" id="PS01244">
    <property type="entry name" value="ACONITASE_2"/>
    <property type="match status" value="1"/>
</dbReference>
<comment type="function">
    <text evidence="1">Catalyzes the isomerization between 2-isopropylmalate and 3-isopropylmalate, via the formation of 2-isopropylmaleate.</text>
</comment>
<comment type="catalytic activity">
    <reaction evidence="1">
        <text>(2R,3S)-3-isopropylmalate = (2S)-2-isopropylmalate</text>
        <dbReference type="Rhea" id="RHEA:32287"/>
        <dbReference type="ChEBI" id="CHEBI:1178"/>
        <dbReference type="ChEBI" id="CHEBI:35121"/>
        <dbReference type="EC" id="4.2.1.33"/>
    </reaction>
</comment>
<comment type="cofactor">
    <cofactor evidence="1">
        <name>[4Fe-4S] cluster</name>
        <dbReference type="ChEBI" id="CHEBI:49883"/>
    </cofactor>
    <text evidence="1">Binds 1 [4Fe-4S] cluster per subunit.</text>
</comment>
<comment type="pathway">
    <text evidence="1">Amino-acid biosynthesis; L-leucine biosynthesis; L-leucine from 3-methyl-2-oxobutanoate: step 2/4.</text>
</comment>
<comment type="subunit">
    <text evidence="1">Heterodimer of LeuC and LeuD.</text>
</comment>
<comment type="similarity">
    <text evidence="1">Belongs to the aconitase/IPM isomerase family. LeuC type 1 subfamily.</text>
</comment>
<name>LEUC_BUCUA</name>
<feature type="chain" id="PRO_0000076723" description="3-isopropylmalate dehydratase large subunit">
    <location>
        <begin position="1"/>
        <end position="443" status="greater than"/>
    </location>
</feature>
<feature type="binding site" evidence="1">
    <location>
        <position position="347"/>
    </location>
    <ligand>
        <name>[4Fe-4S] cluster</name>
        <dbReference type="ChEBI" id="CHEBI:49883"/>
    </ligand>
</feature>
<feature type="binding site" evidence="1">
    <location>
        <position position="407"/>
    </location>
    <ligand>
        <name>[4Fe-4S] cluster</name>
        <dbReference type="ChEBI" id="CHEBI:49883"/>
    </ligand>
</feature>
<feature type="binding site" evidence="1">
    <location>
        <position position="410"/>
    </location>
    <ligand>
        <name>[4Fe-4S] cluster</name>
        <dbReference type="ChEBI" id="CHEBI:49883"/>
    </ligand>
</feature>
<feature type="non-terminal residue">
    <location>
        <position position="443"/>
    </location>
</feature>
<protein>
    <recommendedName>
        <fullName evidence="1">3-isopropylmalate dehydratase large subunit</fullName>
        <ecNumber evidence="1">4.2.1.33</ecNumber>
    </recommendedName>
    <alternativeName>
        <fullName evidence="1">Alpha-IPM isomerase</fullName>
        <shortName evidence="1">IPMI</shortName>
    </alternativeName>
    <alternativeName>
        <fullName evidence="1">Isopropylmalate isomerase</fullName>
    </alternativeName>
</protein>
<gene>
    <name evidence="1" type="primary">leuC</name>
</gene>